<accession>B5XPE6</accession>
<feature type="chain" id="PRO_1000135404" description="Histidinol-phosphate aminotransferase">
    <location>
        <begin position="1"/>
        <end position="353"/>
    </location>
</feature>
<feature type="modified residue" description="N6-(pyridoxal phosphate)lysine" evidence="1">
    <location>
        <position position="211"/>
    </location>
</feature>
<protein>
    <recommendedName>
        <fullName evidence="1">Histidinol-phosphate aminotransferase</fullName>
        <ecNumber evidence="1">2.6.1.9</ecNumber>
    </recommendedName>
    <alternativeName>
        <fullName evidence="1">Imidazole acetol-phosphate transaminase</fullName>
    </alternativeName>
</protein>
<comment type="catalytic activity">
    <reaction evidence="1">
        <text>L-histidinol phosphate + 2-oxoglutarate = 3-(imidazol-4-yl)-2-oxopropyl phosphate + L-glutamate</text>
        <dbReference type="Rhea" id="RHEA:23744"/>
        <dbReference type="ChEBI" id="CHEBI:16810"/>
        <dbReference type="ChEBI" id="CHEBI:29985"/>
        <dbReference type="ChEBI" id="CHEBI:57766"/>
        <dbReference type="ChEBI" id="CHEBI:57980"/>
        <dbReference type="EC" id="2.6.1.9"/>
    </reaction>
</comment>
<comment type="cofactor">
    <cofactor evidence="1">
        <name>pyridoxal 5'-phosphate</name>
        <dbReference type="ChEBI" id="CHEBI:597326"/>
    </cofactor>
</comment>
<comment type="pathway">
    <text evidence="1">Amino-acid biosynthesis; L-histidine biosynthesis; L-histidine from 5-phospho-alpha-D-ribose 1-diphosphate: step 7/9.</text>
</comment>
<comment type="subunit">
    <text evidence="1">Homodimer.</text>
</comment>
<comment type="similarity">
    <text evidence="1">Belongs to the class-II pyridoxal-phosphate-dependent aminotransferase family. Histidinol-phosphate aminotransferase subfamily.</text>
</comment>
<evidence type="ECO:0000255" key="1">
    <source>
        <dbReference type="HAMAP-Rule" id="MF_01023"/>
    </source>
</evidence>
<gene>
    <name evidence="1" type="primary">hisC</name>
    <name type="ordered locus">KPK_1688</name>
</gene>
<organism>
    <name type="scientific">Klebsiella pneumoniae (strain 342)</name>
    <dbReference type="NCBI Taxonomy" id="507522"/>
    <lineage>
        <taxon>Bacteria</taxon>
        <taxon>Pseudomonadati</taxon>
        <taxon>Pseudomonadota</taxon>
        <taxon>Gammaproteobacteria</taxon>
        <taxon>Enterobacterales</taxon>
        <taxon>Enterobacteriaceae</taxon>
        <taxon>Klebsiella/Raoultella group</taxon>
        <taxon>Klebsiella</taxon>
        <taxon>Klebsiella pneumoniae complex</taxon>
    </lineage>
</organism>
<dbReference type="EC" id="2.6.1.9" evidence="1"/>
<dbReference type="EMBL" id="CP000964">
    <property type="protein sequence ID" value="ACI10967.1"/>
    <property type="molecule type" value="Genomic_DNA"/>
</dbReference>
<dbReference type="SMR" id="B5XPE6"/>
<dbReference type="KEGG" id="kpe:KPK_1688"/>
<dbReference type="HOGENOM" id="CLU_017584_3_1_6"/>
<dbReference type="UniPathway" id="UPA00031">
    <property type="reaction ID" value="UER00012"/>
</dbReference>
<dbReference type="Proteomes" id="UP000001734">
    <property type="component" value="Chromosome"/>
</dbReference>
<dbReference type="GO" id="GO:0004400">
    <property type="term" value="F:histidinol-phosphate transaminase activity"/>
    <property type="evidence" value="ECO:0007669"/>
    <property type="project" value="UniProtKB-UniRule"/>
</dbReference>
<dbReference type="GO" id="GO:0030170">
    <property type="term" value="F:pyridoxal phosphate binding"/>
    <property type="evidence" value="ECO:0007669"/>
    <property type="project" value="InterPro"/>
</dbReference>
<dbReference type="GO" id="GO:0000105">
    <property type="term" value="P:L-histidine biosynthetic process"/>
    <property type="evidence" value="ECO:0007669"/>
    <property type="project" value="UniProtKB-UniRule"/>
</dbReference>
<dbReference type="CDD" id="cd00609">
    <property type="entry name" value="AAT_like"/>
    <property type="match status" value="1"/>
</dbReference>
<dbReference type="FunFam" id="3.40.640.10:FF:000032">
    <property type="entry name" value="Histidinol-phosphate aminotransferase"/>
    <property type="match status" value="1"/>
</dbReference>
<dbReference type="Gene3D" id="3.90.1150.10">
    <property type="entry name" value="Aspartate Aminotransferase, domain 1"/>
    <property type="match status" value="1"/>
</dbReference>
<dbReference type="Gene3D" id="3.40.640.10">
    <property type="entry name" value="Type I PLP-dependent aspartate aminotransferase-like (Major domain)"/>
    <property type="match status" value="1"/>
</dbReference>
<dbReference type="HAMAP" id="MF_01023">
    <property type="entry name" value="HisC_aminotrans_2"/>
    <property type="match status" value="1"/>
</dbReference>
<dbReference type="InterPro" id="IPR001917">
    <property type="entry name" value="Aminotrans_II_pyridoxalP_BS"/>
</dbReference>
<dbReference type="InterPro" id="IPR004839">
    <property type="entry name" value="Aminotransferase_I/II_large"/>
</dbReference>
<dbReference type="InterPro" id="IPR005861">
    <property type="entry name" value="HisP_aminotrans"/>
</dbReference>
<dbReference type="InterPro" id="IPR015424">
    <property type="entry name" value="PyrdxlP-dep_Trfase"/>
</dbReference>
<dbReference type="InterPro" id="IPR015421">
    <property type="entry name" value="PyrdxlP-dep_Trfase_major"/>
</dbReference>
<dbReference type="InterPro" id="IPR015422">
    <property type="entry name" value="PyrdxlP-dep_Trfase_small"/>
</dbReference>
<dbReference type="NCBIfam" id="TIGR01141">
    <property type="entry name" value="hisC"/>
    <property type="match status" value="1"/>
</dbReference>
<dbReference type="PANTHER" id="PTHR42885:SF2">
    <property type="entry name" value="HISTIDINOL-PHOSPHATE AMINOTRANSFERASE"/>
    <property type="match status" value="1"/>
</dbReference>
<dbReference type="PANTHER" id="PTHR42885">
    <property type="entry name" value="HISTIDINOL-PHOSPHATE AMINOTRANSFERASE-RELATED"/>
    <property type="match status" value="1"/>
</dbReference>
<dbReference type="Pfam" id="PF00155">
    <property type="entry name" value="Aminotran_1_2"/>
    <property type="match status" value="1"/>
</dbReference>
<dbReference type="SUPFAM" id="SSF53383">
    <property type="entry name" value="PLP-dependent transferases"/>
    <property type="match status" value="1"/>
</dbReference>
<dbReference type="PROSITE" id="PS00599">
    <property type="entry name" value="AA_TRANSFER_CLASS_2"/>
    <property type="match status" value="1"/>
</dbReference>
<proteinExistence type="inferred from homology"/>
<reference key="1">
    <citation type="journal article" date="2008" name="PLoS Genet.">
        <title>Complete genome sequence of the N2-fixing broad host range endophyte Klebsiella pneumoniae 342 and virulence predictions verified in mice.</title>
        <authorList>
            <person name="Fouts D.E."/>
            <person name="Tyler H.L."/>
            <person name="DeBoy R.T."/>
            <person name="Daugherty S."/>
            <person name="Ren Q."/>
            <person name="Badger J.H."/>
            <person name="Durkin A.S."/>
            <person name="Huot H."/>
            <person name="Shrivastava S."/>
            <person name="Kothari S."/>
            <person name="Dodson R.J."/>
            <person name="Mohamoud Y."/>
            <person name="Khouri H."/>
            <person name="Roesch L.F.W."/>
            <person name="Krogfelt K.A."/>
            <person name="Struve C."/>
            <person name="Triplett E.W."/>
            <person name="Methe B.A."/>
        </authorList>
    </citation>
    <scope>NUCLEOTIDE SEQUENCE [LARGE SCALE GENOMIC DNA]</scope>
    <source>
        <strain>342</strain>
    </source>
</reference>
<sequence length="353" mass="38632">MSIEDLARANVRALTPYQSARRLGGKGDVWLNANEFPTAVAFQLTAQTMNRYPEPQPKAVIESYARYADVKPEQVLVSRGADEGIELLIRAFCEPGKDALLYCPPTYGMYSVSAETIGVECRTVPTLADWQLDLPGIEAQLDGVKVVFVCSPNNPTGQIIDPQSIRDLLEMTRDKAIVVADEAYIEFCPQATLAGWLSDYPHLVVVRTLSKAFALAGLRCGFTLANAEVINVLLKVIAPYPLSTPVADIAAQALSAEGIAAMRQRVAQILDERRYLVEQLRGIACVEQVFDSEANYVLARITASSAVFKSLWDQGIILRDQNKQPSLSGCLRITIGTRAESQRVIDALTAENV</sequence>
<keyword id="KW-0028">Amino-acid biosynthesis</keyword>
<keyword id="KW-0032">Aminotransferase</keyword>
<keyword id="KW-0368">Histidine biosynthesis</keyword>
<keyword id="KW-0663">Pyridoxal phosphate</keyword>
<keyword id="KW-0808">Transferase</keyword>
<name>HIS8_KLEP3</name>